<protein>
    <recommendedName>
        <fullName evidence="1">Histidine ammonia-lyase</fullName>
        <shortName evidence="1">Histidase</shortName>
        <ecNumber evidence="1">4.3.1.3</ecNumber>
    </recommendedName>
</protein>
<gene>
    <name evidence="1" type="primary">hutH</name>
    <name type="ordered locus">BH06500</name>
</gene>
<organism>
    <name type="scientific">Bartonella henselae (strain ATCC 49882 / DSM 28221 / CCUG 30454 / Houston 1)</name>
    <name type="common">Rochalimaea henselae</name>
    <dbReference type="NCBI Taxonomy" id="283166"/>
    <lineage>
        <taxon>Bacteria</taxon>
        <taxon>Pseudomonadati</taxon>
        <taxon>Pseudomonadota</taxon>
        <taxon>Alphaproteobacteria</taxon>
        <taxon>Hyphomicrobiales</taxon>
        <taxon>Bartonellaceae</taxon>
        <taxon>Bartonella</taxon>
    </lineage>
</organism>
<feature type="chain" id="PRO_0000160992" description="Histidine ammonia-lyase">
    <location>
        <begin position="1"/>
        <end position="512"/>
    </location>
</feature>
<feature type="modified residue" description="2,3-didehydroalanine (Ser)" evidence="1">
    <location>
        <position position="143"/>
    </location>
</feature>
<feature type="cross-link" description="5-imidazolinone (Ala-Gly)" evidence="1">
    <location>
        <begin position="142"/>
        <end position="144"/>
    </location>
</feature>
<reference key="1">
    <citation type="journal article" date="2004" name="Proc. Natl. Acad. Sci. U.S.A.">
        <title>The louse-borne human pathogen Bartonella quintana is a genomic derivative of the zoonotic agent Bartonella henselae.</title>
        <authorList>
            <person name="Alsmark U.C.M."/>
            <person name="Frank A.C."/>
            <person name="Karlberg E.O."/>
            <person name="Legault B.-A."/>
            <person name="Ardell D.H."/>
            <person name="Canbaeck B."/>
            <person name="Eriksson A.-S."/>
            <person name="Naeslund A.K."/>
            <person name="Handley S.A."/>
            <person name="Huvet M."/>
            <person name="La Scola B."/>
            <person name="Holmberg M."/>
            <person name="Andersson S.G.E."/>
        </authorList>
    </citation>
    <scope>NUCLEOTIDE SEQUENCE [LARGE SCALE GENOMIC DNA]</scope>
    <source>
        <strain>ATCC 49882 / DSM 28221 / CCUG 30454 / Houston 1</strain>
    </source>
</reference>
<evidence type="ECO:0000255" key="1">
    <source>
        <dbReference type="HAMAP-Rule" id="MF_00229"/>
    </source>
</evidence>
<name>HUTH_BARHE</name>
<proteinExistence type="inferred from homology"/>
<accession>Q6G3U8</accession>
<keyword id="KW-0963">Cytoplasm</keyword>
<keyword id="KW-0369">Histidine metabolism</keyword>
<keyword id="KW-0456">Lyase</keyword>
<sequence length="512" mass="54394">MTIVLNPGKVTLSQLEAVYWNGEVSKLHHDTHFAIKKGAERIAKIAAGSEPVYGINTGFGKLASIKIDADNVVVLQRNLILSHCCGVGVPLAENIVRLMMTLKLISLGRGASGVRLELVQLLENMLANGVIPVIPEKGSVGASGDLAPLAHMAAVMMGEGEAFFQNIRMSGIAALEKAGLCPITLEAKEGLALINGTQTSTALALAGLFRGYRALCGGLLAGALTTDALMGSTAPFHPDIHILRGHYGQIVVSETLEKLVKDSGIRAAHLRDDDRVQDPYCIRCQPQVMGACFDLLIAAAKTLIIEANAVTDNPLILSDDTVVSGGNFHAEPVAFAADQIALALCEIGSISQRRIALMVDPAVSYGLPAFLAKNAGLNSGFMIAEVTAAALMSENKQMAHPASVDSTPTSANQEDHVSMACHGARRLLAMSENLFTIIGIETLVAAQGIEYRAPLKTSSLLQSVMEYLRKNIDTLKGDRYLASDLHKAHILVSEGRLLSVLSETIFPQLKPK</sequence>
<comment type="catalytic activity">
    <reaction evidence="1">
        <text>L-histidine = trans-urocanate + NH4(+)</text>
        <dbReference type="Rhea" id="RHEA:21232"/>
        <dbReference type="ChEBI" id="CHEBI:17771"/>
        <dbReference type="ChEBI" id="CHEBI:28938"/>
        <dbReference type="ChEBI" id="CHEBI:57595"/>
        <dbReference type="EC" id="4.3.1.3"/>
    </reaction>
</comment>
<comment type="pathway">
    <text evidence="1">Amino-acid degradation; L-histidine degradation into L-glutamate; N-formimidoyl-L-glutamate from L-histidine: step 1/3.</text>
</comment>
<comment type="subcellular location">
    <subcellularLocation>
        <location evidence="1">Cytoplasm</location>
    </subcellularLocation>
</comment>
<comment type="PTM">
    <text evidence="1">Contains an active site 4-methylidene-imidazol-5-one (MIO), which is formed autocatalytically by cyclization and dehydration of residues Ala-Ser-Gly.</text>
</comment>
<comment type="similarity">
    <text evidence="1">Belongs to the PAL/histidase family.</text>
</comment>
<dbReference type="EC" id="4.3.1.3" evidence="1"/>
<dbReference type="EMBL" id="BX897699">
    <property type="protein sequence ID" value="CAF27453.1"/>
    <property type="molecule type" value="Genomic_DNA"/>
</dbReference>
<dbReference type="RefSeq" id="WP_011180573.1">
    <property type="nucleotide sequence ID" value="NZ_LRIJ02000001.1"/>
</dbReference>
<dbReference type="SMR" id="Q6G3U8"/>
<dbReference type="PaxDb" id="283166-BH06500"/>
<dbReference type="EnsemblBacteria" id="CAF27453">
    <property type="protein sequence ID" value="CAF27453"/>
    <property type="gene ID" value="BH06500"/>
</dbReference>
<dbReference type="GeneID" id="92985624"/>
<dbReference type="KEGG" id="bhe:BH06500"/>
<dbReference type="eggNOG" id="COG2986">
    <property type="taxonomic scope" value="Bacteria"/>
</dbReference>
<dbReference type="OrthoDB" id="9806955at2"/>
<dbReference type="UniPathway" id="UPA00379">
    <property type="reaction ID" value="UER00549"/>
</dbReference>
<dbReference type="Proteomes" id="UP000000421">
    <property type="component" value="Chromosome"/>
</dbReference>
<dbReference type="GO" id="GO:0005737">
    <property type="term" value="C:cytoplasm"/>
    <property type="evidence" value="ECO:0007669"/>
    <property type="project" value="UniProtKB-SubCell"/>
</dbReference>
<dbReference type="GO" id="GO:0004397">
    <property type="term" value="F:histidine ammonia-lyase activity"/>
    <property type="evidence" value="ECO:0007669"/>
    <property type="project" value="UniProtKB-UniRule"/>
</dbReference>
<dbReference type="GO" id="GO:0019556">
    <property type="term" value="P:L-histidine catabolic process to glutamate and formamide"/>
    <property type="evidence" value="ECO:0007669"/>
    <property type="project" value="UniProtKB-UniPathway"/>
</dbReference>
<dbReference type="GO" id="GO:0019557">
    <property type="term" value="P:L-histidine catabolic process to glutamate and formate"/>
    <property type="evidence" value="ECO:0007669"/>
    <property type="project" value="UniProtKB-UniPathway"/>
</dbReference>
<dbReference type="CDD" id="cd00332">
    <property type="entry name" value="PAL-HAL"/>
    <property type="match status" value="1"/>
</dbReference>
<dbReference type="FunFam" id="1.10.275.10:FF:000005">
    <property type="entry name" value="Histidine ammonia-lyase"/>
    <property type="match status" value="1"/>
</dbReference>
<dbReference type="FunFam" id="1.20.200.10:FF:000003">
    <property type="entry name" value="Histidine ammonia-lyase"/>
    <property type="match status" value="1"/>
</dbReference>
<dbReference type="Gene3D" id="1.20.200.10">
    <property type="entry name" value="Fumarase/aspartase (Central domain)"/>
    <property type="match status" value="1"/>
</dbReference>
<dbReference type="Gene3D" id="1.10.275.10">
    <property type="entry name" value="Fumarase/aspartase (N-terminal domain)"/>
    <property type="match status" value="1"/>
</dbReference>
<dbReference type="HAMAP" id="MF_00229">
    <property type="entry name" value="His_ammonia_lyase"/>
    <property type="match status" value="1"/>
</dbReference>
<dbReference type="InterPro" id="IPR001106">
    <property type="entry name" value="Aromatic_Lyase"/>
</dbReference>
<dbReference type="InterPro" id="IPR024083">
    <property type="entry name" value="Fumarase/histidase_N"/>
</dbReference>
<dbReference type="InterPro" id="IPR005921">
    <property type="entry name" value="HutH"/>
</dbReference>
<dbReference type="InterPro" id="IPR008948">
    <property type="entry name" value="L-Aspartase-like"/>
</dbReference>
<dbReference type="InterPro" id="IPR022313">
    <property type="entry name" value="Phe/His_NH3-lyase_AS"/>
</dbReference>
<dbReference type="NCBIfam" id="TIGR01225">
    <property type="entry name" value="hutH"/>
    <property type="match status" value="1"/>
</dbReference>
<dbReference type="NCBIfam" id="NF006871">
    <property type="entry name" value="PRK09367.1"/>
    <property type="match status" value="1"/>
</dbReference>
<dbReference type="PANTHER" id="PTHR10362">
    <property type="entry name" value="HISTIDINE AMMONIA-LYASE"/>
    <property type="match status" value="1"/>
</dbReference>
<dbReference type="Pfam" id="PF00221">
    <property type="entry name" value="Lyase_aromatic"/>
    <property type="match status" value="1"/>
</dbReference>
<dbReference type="SUPFAM" id="SSF48557">
    <property type="entry name" value="L-aspartase-like"/>
    <property type="match status" value="1"/>
</dbReference>
<dbReference type="PROSITE" id="PS00488">
    <property type="entry name" value="PAL_HISTIDASE"/>
    <property type="match status" value="1"/>
</dbReference>